<evidence type="ECO:0000305" key="1"/>
<sequence length="89" mass="10556">MTSVNNNMTSRRNLVLREIKRQILWAWTDPKSYRMSVGAIHALRTAFECYMNIIMTDCAIMAAHGKRKTITDRDIAFHQYIKPFYLPRY</sequence>
<comment type="similarity">
    <text evidence="1">Belongs to the histone H3 family.</text>
</comment>
<comment type="caution">
    <text evidence="1">In contrast to other members of the histone H3 family, this protein is shorter and has a highly divergent N-terminus. It is therefore unclear whether it is a real histones.</text>
</comment>
<dbReference type="EMBL" id="AAFI02000023">
    <property type="protein sequence ID" value="EAL68162.1"/>
    <property type="molecule type" value="Genomic_DNA"/>
</dbReference>
<dbReference type="RefSeq" id="XP_642045.1">
    <property type="nucleotide sequence ID" value="XM_636953.1"/>
</dbReference>
<dbReference type="SMR" id="Q54Z07"/>
<dbReference type="FunCoup" id="Q54Z07">
    <property type="interactions" value="394"/>
</dbReference>
<dbReference type="STRING" id="44689.Q54Z07"/>
<dbReference type="PaxDb" id="44689-DDB0232117"/>
<dbReference type="EnsemblProtists" id="EAL68162">
    <property type="protein sequence ID" value="EAL68162"/>
    <property type="gene ID" value="DDB_G0277979"/>
</dbReference>
<dbReference type="GeneID" id="8621257"/>
<dbReference type="KEGG" id="ddi:DDB_G0277979"/>
<dbReference type="dictyBase" id="DDB_G0277979">
    <property type="gene designation" value="H3v2"/>
</dbReference>
<dbReference type="VEuPathDB" id="AmoebaDB:DDB_G0277979"/>
<dbReference type="HOGENOM" id="CLU_2459411_0_0_1"/>
<dbReference type="InParanoid" id="Q54Z07"/>
<dbReference type="PRO" id="PR:Q54Z07"/>
<dbReference type="Proteomes" id="UP000002195">
    <property type="component" value="Chromosome 3"/>
</dbReference>
<dbReference type="GO" id="GO:0005634">
    <property type="term" value="C:nucleus"/>
    <property type="evidence" value="ECO:0000318"/>
    <property type="project" value="GO_Central"/>
</dbReference>
<dbReference type="GO" id="GO:0003677">
    <property type="term" value="F:DNA binding"/>
    <property type="evidence" value="ECO:0007669"/>
    <property type="project" value="InterPro"/>
</dbReference>
<dbReference type="GO" id="GO:0046982">
    <property type="term" value="F:protein heterodimerization activity"/>
    <property type="evidence" value="ECO:0007669"/>
    <property type="project" value="InterPro"/>
</dbReference>
<dbReference type="Gene3D" id="1.10.20.10">
    <property type="entry name" value="Histone, subunit A"/>
    <property type="match status" value="1"/>
</dbReference>
<dbReference type="InterPro" id="IPR009072">
    <property type="entry name" value="Histone-fold"/>
</dbReference>
<dbReference type="InterPro" id="IPR007125">
    <property type="entry name" value="Histone_H2A/H2B/H3"/>
</dbReference>
<dbReference type="Pfam" id="PF00125">
    <property type="entry name" value="Histone"/>
    <property type="match status" value="1"/>
</dbReference>
<dbReference type="SUPFAM" id="SSF47113">
    <property type="entry name" value="Histone-fold"/>
    <property type="match status" value="1"/>
</dbReference>
<keyword id="KW-1185">Reference proteome</keyword>
<protein>
    <recommendedName>
        <fullName>Histone H3.v2</fullName>
    </recommendedName>
</protein>
<name>H3V2_DICDI</name>
<accession>Q54Z07</accession>
<reference key="1">
    <citation type="journal article" date="2005" name="Nature">
        <title>The genome of the social amoeba Dictyostelium discoideum.</title>
        <authorList>
            <person name="Eichinger L."/>
            <person name="Pachebat J.A."/>
            <person name="Gloeckner G."/>
            <person name="Rajandream M.A."/>
            <person name="Sucgang R."/>
            <person name="Berriman M."/>
            <person name="Song J."/>
            <person name="Olsen R."/>
            <person name="Szafranski K."/>
            <person name="Xu Q."/>
            <person name="Tunggal B."/>
            <person name="Kummerfeld S."/>
            <person name="Madera M."/>
            <person name="Konfortov B.A."/>
            <person name="Rivero F."/>
            <person name="Bankier A.T."/>
            <person name="Lehmann R."/>
            <person name="Hamlin N."/>
            <person name="Davies R."/>
            <person name="Gaudet P."/>
            <person name="Fey P."/>
            <person name="Pilcher K."/>
            <person name="Chen G."/>
            <person name="Saunders D."/>
            <person name="Sodergren E.J."/>
            <person name="Davis P."/>
            <person name="Kerhornou A."/>
            <person name="Nie X."/>
            <person name="Hall N."/>
            <person name="Anjard C."/>
            <person name="Hemphill L."/>
            <person name="Bason N."/>
            <person name="Farbrother P."/>
            <person name="Desany B."/>
            <person name="Just E."/>
            <person name="Morio T."/>
            <person name="Rost R."/>
            <person name="Churcher C.M."/>
            <person name="Cooper J."/>
            <person name="Haydock S."/>
            <person name="van Driessche N."/>
            <person name="Cronin A."/>
            <person name="Goodhead I."/>
            <person name="Muzny D.M."/>
            <person name="Mourier T."/>
            <person name="Pain A."/>
            <person name="Lu M."/>
            <person name="Harper D."/>
            <person name="Lindsay R."/>
            <person name="Hauser H."/>
            <person name="James K.D."/>
            <person name="Quiles M."/>
            <person name="Madan Babu M."/>
            <person name="Saito T."/>
            <person name="Buchrieser C."/>
            <person name="Wardroper A."/>
            <person name="Felder M."/>
            <person name="Thangavelu M."/>
            <person name="Johnson D."/>
            <person name="Knights A."/>
            <person name="Loulseged H."/>
            <person name="Mungall K.L."/>
            <person name="Oliver K."/>
            <person name="Price C."/>
            <person name="Quail M.A."/>
            <person name="Urushihara H."/>
            <person name="Hernandez J."/>
            <person name="Rabbinowitsch E."/>
            <person name="Steffen D."/>
            <person name="Sanders M."/>
            <person name="Ma J."/>
            <person name="Kohara Y."/>
            <person name="Sharp S."/>
            <person name="Simmonds M.N."/>
            <person name="Spiegler S."/>
            <person name="Tivey A."/>
            <person name="Sugano S."/>
            <person name="White B."/>
            <person name="Walker D."/>
            <person name="Woodward J.R."/>
            <person name="Winckler T."/>
            <person name="Tanaka Y."/>
            <person name="Shaulsky G."/>
            <person name="Schleicher M."/>
            <person name="Weinstock G.M."/>
            <person name="Rosenthal A."/>
            <person name="Cox E.C."/>
            <person name="Chisholm R.L."/>
            <person name="Gibbs R.A."/>
            <person name="Loomis W.F."/>
            <person name="Platzer M."/>
            <person name="Kay R.R."/>
            <person name="Williams J.G."/>
            <person name="Dear P.H."/>
            <person name="Noegel A.A."/>
            <person name="Barrell B.G."/>
            <person name="Kuspa A."/>
        </authorList>
    </citation>
    <scope>NUCLEOTIDE SEQUENCE [LARGE SCALE GENOMIC DNA]</scope>
    <source>
        <strain>AX4</strain>
    </source>
</reference>
<organism>
    <name type="scientific">Dictyostelium discoideum</name>
    <name type="common">Social amoeba</name>
    <dbReference type="NCBI Taxonomy" id="44689"/>
    <lineage>
        <taxon>Eukaryota</taxon>
        <taxon>Amoebozoa</taxon>
        <taxon>Evosea</taxon>
        <taxon>Eumycetozoa</taxon>
        <taxon>Dictyostelia</taxon>
        <taxon>Dictyosteliales</taxon>
        <taxon>Dictyosteliaceae</taxon>
        <taxon>Dictyostelium</taxon>
    </lineage>
</organism>
<proteinExistence type="inferred from homology"/>
<feature type="chain" id="PRO_0000389164" description="Histone H3.v2">
    <location>
        <begin position="1"/>
        <end position="89"/>
    </location>
</feature>
<gene>
    <name type="primary">H3v2</name>
    <name type="ORF">DDB_G0277979</name>
</gene>